<feature type="chain" id="PRO_0000242514" description="Nucleoside diphosphate kinase">
    <location>
        <begin position="1"/>
        <end position="140"/>
    </location>
</feature>
<feature type="active site" description="Pros-phosphohistidine intermediate" evidence="1">
    <location>
        <position position="117"/>
    </location>
</feature>
<feature type="binding site" evidence="1">
    <location>
        <position position="11"/>
    </location>
    <ligand>
        <name>ATP</name>
        <dbReference type="ChEBI" id="CHEBI:30616"/>
    </ligand>
</feature>
<feature type="binding site" evidence="1">
    <location>
        <position position="59"/>
    </location>
    <ligand>
        <name>ATP</name>
        <dbReference type="ChEBI" id="CHEBI:30616"/>
    </ligand>
</feature>
<feature type="binding site" evidence="1">
    <location>
        <position position="87"/>
    </location>
    <ligand>
        <name>ATP</name>
        <dbReference type="ChEBI" id="CHEBI:30616"/>
    </ligand>
</feature>
<feature type="binding site" evidence="1">
    <location>
        <position position="93"/>
    </location>
    <ligand>
        <name>ATP</name>
        <dbReference type="ChEBI" id="CHEBI:30616"/>
    </ligand>
</feature>
<feature type="binding site" evidence="1">
    <location>
        <position position="104"/>
    </location>
    <ligand>
        <name>ATP</name>
        <dbReference type="ChEBI" id="CHEBI:30616"/>
    </ligand>
</feature>
<feature type="binding site" evidence="1">
    <location>
        <position position="114"/>
    </location>
    <ligand>
        <name>ATP</name>
        <dbReference type="ChEBI" id="CHEBI:30616"/>
    </ligand>
</feature>
<protein>
    <recommendedName>
        <fullName evidence="1">Nucleoside diphosphate kinase</fullName>
        <shortName evidence="1">NDK</shortName>
        <shortName evidence="1">NDP kinase</shortName>
        <ecNumber evidence="1">2.7.4.6</ecNumber>
    </recommendedName>
    <alternativeName>
        <fullName evidence="1">Nucleoside-2-P kinase</fullName>
    </alternativeName>
</protein>
<keyword id="KW-0067">ATP-binding</keyword>
<keyword id="KW-0963">Cytoplasm</keyword>
<keyword id="KW-0418">Kinase</keyword>
<keyword id="KW-0460">Magnesium</keyword>
<keyword id="KW-0479">Metal-binding</keyword>
<keyword id="KW-0546">Nucleotide metabolism</keyword>
<keyword id="KW-0547">Nucleotide-binding</keyword>
<keyword id="KW-0597">Phosphoprotein</keyword>
<keyword id="KW-0808">Transferase</keyword>
<dbReference type="EC" id="2.7.4.6" evidence="1"/>
<dbReference type="EMBL" id="CP000087">
    <property type="protein sequence ID" value="ABE05434.1"/>
    <property type="molecule type" value="Genomic_DNA"/>
</dbReference>
<dbReference type="RefSeq" id="WP_011478003.1">
    <property type="nucleotide sequence ID" value="NC_007940.1"/>
</dbReference>
<dbReference type="SMR" id="Q1RGT0"/>
<dbReference type="KEGG" id="rbe:RBE_1353"/>
<dbReference type="eggNOG" id="COG0105">
    <property type="taxonomic scope" value="Bacteria"/>
</dbReference>
<dbReference type="HOGENOM" id="CLU_060216_8_1_5"/>
<dbReference type="OrthoDB" id="9801161at2"/>
<dbReference type="Proteomes" id="UP000001951">
    <property type="component" value="Chromosome"/>
</dbReference>
<dbReference type="GO" id="GO:0005737">
    <property type="term" value="C:cytoplasm"/>
    <property type="evidence" value="ECO:0007669"/>
    <property type="project" value="UniProtKB-SubCell"/>
</dbReference>
<dbReference type="GO" id="GO:0005524">
    <property type="term" value="F:ATP binding"/>
    <property type="evidence" value="ECO:0007669"/>
    <property type="project" value="UniProtKB-UniRule"/>
</dbReference>
<dbReference type="GO" id="GO:0046872">
    <property type="term" value="F:metal ion binding"/>
    <property type="evidence" value="ECO:0007669"/>
    <property type="project" value="UniProtKB-KW"/>
</dbReference>
<dbReference type="GO" id="GO:0004550">
    <property type="term" value="F:nucleoside diphosphate kinase activity"/>
    <property type="evidence" value="ECO:0007669"/>
    <property type="project" value="UniProtKB-UniRule"/>
</dbReference>
<dbReference type="GO" id="GO:0006241">
    <property type="term" value="P:CTP biosynthetic process"/>
    <property type="evidence" value="ECO:0007669"/>
    <property type="project" value="UniProtKB-UniRule"/>
</dbReference>
<dbReference type="GO" id="GO:0006183">
    <property type="term" value="P:GTP biosynthetic process"/>
    <property type="evidence" value="ECO:0007669"/>
    <property type="project" value="UniProtKB-UniRule"/>
</dbReference>
<dbReference type="GO" id="GO:0006228">
    <property type="term" value="P:UTP biosynthetic process"/>
    <property type="evidence" value="ECO:0007669"/>
    <property type="project" value="UniProtKB-UniRule"/>
</dbReference>
<dbReference type="CDD" id="cd04413">
    <property type="entry name" value="NDPk_I"/>
    <property type="match status" value="1"/>
</dbReference>
<dbReference type="FunFam" id="3.30.70.141:FF:000003">
    <property type="entry name" value="Nucleoside diphosphate kinase"/>
    <property type="match status" value="1"/>
</dbReference>
<dbReference type="Gene3D" id="3.30.70.141">
    <property type="entry name" value="Nucleoside diphosphate kinase-like domain"/>
    <property type="match status" value="1"/>
</dbReference>
<dbReference type="HAMAP" id="MF_00451">
    <property type="entry name" value="NDP_kinase"/>
    <property type="match status" value="1"/>
</dbReference>
<dbReference type="InterPro" id="IPR034907">
    <property type="entry name" value="NDK-like_dom"/>
</dbReference>
<dbReference type="InterPro" id="IPR036850">
    <property type="entry name" value="NDK-like_dom_sf"/>
</dbReference>
<dbReference type="InterPro" id="IPR001564">
    <property type="entry name" value="Nucleoside_diP_kinase"/>
</dbReference>
<dbReference type="InterPro" id="IPR023005">
    <property type="entry name" value="Nucleoside_diP_kinase_AS"/>
</dbReference>
<dbReference type="NCBIfam" id="NF001908">
    <property type="entry name" value="PRK00668.1"/>
    <property type="match status" value="1"/>
</dbReference>
<dbReference type="PANTHER" id="PTHR46161">
    <property type="entry name" value="NUCLEOSIDE DIPHOSPHATE KINASE"/>
    <property type="match status" value="1"/>
</dbReference>
<dbReference type="PANTHER" id="PTHR46161:SF3">
    <property type="entry name" value="NUCLEOSIDE DIPHOSPHATE KINASE DDB_G0292928-RELATED"/>
    <property type="match status" value="1"/>
</dbReference>
<dbReference type="Pfam" id="PF00334">
    <property type="entry name" value="NDK"/>
    <property type="match status" value="1"/>
</dbReference>
<dbReference type="PRINTS" id="PR01243">
    <property type="entry name" value="NUCDPKINASE"/>
</dbReference>
<dbReference type="SMART" id="SM00562">
    <property type="entry name" value="NDK"/>
    <property type="match status" value="1"/>
</dbReference>
<dbReference type="SUPFAM" id="SSF54919">
    <property type="entry name" value="Nucleoside diphosphate kinase, NDK"/>
    <property type="match status" value="1"/>
</dbReference>
<dbReference type="PROSITE" id="PS00469">
    <property type="entry name" value="NDPK"/>
    <property type="match status" value="1"/>
</dbReference>
<dbReference type="PROSITE" id="PS51374">
    <property type="entry name" value="NDPK_LIKE"/>
    <property type="match status" value="1"/>
</dbReference>
<accession>Q1RGT0</accession>
<comment type="function">
    <text evidence="1">Major role in the synthesis of nucleoside triphosphates other than ATP. The ATP gamma phosphate is transferred to the NDP beta phosphate via a ping-pong mechanism, using a phosphorylated active-site intermediate.</text>
</comment>
<comment type="catalytic activity">
    <reaction evidence="1">
        <text>a 2'-deoxyribonucleoside 5'-diphosphate + ATP = a 2'-deoxyribonucleoside 5'-triphosphate + ADP</text>
        <dbReference type="Rhea" id="RHEA:44640"/>
        <dbReference type="ChEBI" id="CHEBI:30616"/>
        <dbReference type="ChEBI" id="CHEBI:61560"/>
        <dbReference type="ChEBI" id="CHEBI:73316"/>
        <dbReference type="ChEBI" id="CHEBI:456216"/>
        <dbReference type="EC" id="2.7.4.6"/>
    </reaction>
</comment>
<comment type="catalytic activity">
    <reaction evidence="1">
        <text>a ribonucleoside 5'-diphosphate + ATP = a ribonucleoside 5'-triphosphate + ADP</text>
        <dbReference type="Rhea" id="RHEA:18113"/>
        <dbReference type="ChEBI" id="CHEBI:30616"/>
        <dbReference type="ChEBI" id="CHEBI:57930"/>
        <dbReference type="ChEBI" id="CHEBI:61557"/>
        <dbReference type="ChEBI" id="CHEBI:456216"/>
        <dbReference type="EC" id="2.7.4.6"/>
    </reaction>
</comment>
<comment type="cofactor">
    <cofactor evidence="1">
        <name>Mg(2+)</name>
        <dbReference type="ChEBI" id="CHEBI:18420"/>
    </cofactor>
</comment>
<comment type="subunit">
    <text evidence="1">Homotetramer.</text>
</comment>
<comment type="subcellular location">
    <subcellularLocation>
        <location evidence="1">Cytoplasm</location>
    </subcellularLocation>
</comment>
<comment type="similarity">
    <text evidence="1">Belongs to the NDK family.</text>
</comment>
<reference key="1">
    <citation type="journal article" date="2006" name="PLoS Genet.">
        <title>Genome sequence of Rickettsia bellii illuminates the role of amoebae in gene exchanges between intracellular pathogens.</title>
        <authorList>
            <person name="Ogata H."/>
            <person name="La Scola B."/>
            <person name="Audic S."/>
            <person name="Renesto P."/>
            <person name="Blanc G."/>
            <person name="Robert C."/>
            <person name="Fournier P.-E."/>
            <person name="Claverie J.-M."/>
            <person name="Raoult D."/>
        </authorList>
    </citation>
    <scope>NUCLEOTIDE SEQUENCE [LARGE SCALE GENOMIC DNA]</scope>
    <source>
        <strain>RML369-C</strain>
    </source>
</reference>
<evidence type="ECO:0000255" key="1">
    <source>
        <dbReference type="HAMAP-Rule" id="MF_00451"/>
    </source>
</evidence>
<sequence>MTIQYTFSMIKPDAIKRNKIGQVNTYLENEGLKIVAQKMTTLTKYEAECFYDEHRARPFFDSLVEYITSGPVVLQVLKGMDAITLNRKVMGATNPAEAEAGTIRKDIGESIEANSIHGSDSENSAKREIKFFFKKSEIIE</sequence>
<proteinExistence type="inferred from homology"/>
<gene>
    <name evidence="1" type="primary">ndk</name>
    <name type="ordered locus">RBE_1353</name>
</gene>
<name>NDK_RICBR</name>
<organism>
    <name type="scientific">Rickettsia bellii (strain RML369-C)</name>
    <dbReference type="NCBI Taxonomy" id="336407"/>
    <lineage>
        <taxon>Bacteria</taxon>
        <taxon>Pseudomonadati</taxon>
        <taxon>Pseudomonadota</taxon>
        <taxon>Alphaproteobacteria</taxon>
        <taxon>Rickettsiales</taxon>
        <taxon>Rickettsiaceae</taxon>
        <taxon>Rickettsieae</taxon>
        <taxon>Rickettsia</taxon>
        <taxon>belli group</taxon>
    </lineage>
</organism>